<evidence type="ECO:0000255" key="1">
    <source>
        <dbReference type="HAMAP-Rule" id="MF_01363"/>
    </source>
</evidence>
<evidence type="ECO:0000305" key="2"/>
<protein>
    <recommendedName>
        <fullName evidence="1">Large ribosomal subunit protein bL21</fullName>
    </recommendedName>
    <alternativeName>
        <fullName evidence="2">50S ribosomal protein L21</fullName>
    </alternativeName>
</protein>
<reference key="1">
    <citation type="journal article" date="2006" name="PLoS Genet.">
        <title>Comparative genomics of emerging human ehrlichiosis agents.</title>
        <authorList>
            <person name="Dunning Hotopp J.C."/>
            <person name="Lin M."/>
            <person name="Madupu R."/>
            <person name="Crabtree J."/>
            <person name="Angiuoli S.V."/>
            <person name="Eisen J.A."/>
            <person name="Seshadri R."/>
            <person name="Ren Q."/>
            <person name="Wu M."/>
            <person name="Utterback T.R."/>
            <person name="Smith S."/>
            <person name="Lewis M."/>
            <person name="Khouri H."/>
            <person name="Zhang C."/>
            <person name="Niu H."/>
            <person name="Lin Q."/>
            <person name="Ohashi N."/>
            <person name="Zhi N."/>
            <person name="Nelson W.C."/>
            <person name="Brinkac L.M."/>
            <person name="Dodson R.J."/>
            <person name="Rosovitz M.J."/>
            <person name="Sundaram J.P."/>
            <person name="Daugherty S.C."/>
            <person name="Davidsen T."/>
            <person name="Durkin A.S."/>
            <person name="Gwinn M.L."/>
            <person name="Haft D.H."/>
            <person name="Selengut J.D."/>
            <person name="Sullivan S.A."/>
            <person name="Zafar N."/>
            <person name="Zhou L."/>
            <person name="Benahmed F."/>
            <person name="Forberger H."/>
            <person name="Halpin R."/>
            <person name="Mulligan S."/>
            <person name="Robinson J."/>
            <person name="White O."/>
            <person name="Rikihisa Y."/>
            <person name="Tettelin H."/>
        </authorList>
    </citation>
    <scope>NUCLEOTIDE SEQUENCE [LARGE SCALE GENOMIC DNA]</scope>
    <source>
        <strain>ATCC CRL-10679 / Arkansas</strain>
    </source>
</reference>
<dbReference type="EMBL" id="CP000236">
    <property type="protein sequence ID" value="ABD45292.1"/>
    <property type="molecule type" value="Genomic_DNA"/>
</dbReference>
<dbReference type="RefSeq" id="WP_006010552.1">
    <property type="nucleotide sequence ID" value="NC_007799.1"/>
</dbReference>
<dbReference type="SMR" id="Q2GGS5"/>
<dbReference type="STRING" id="205920.ECH_0545"/>
<dbReference type="KEGG" id="ech:ECH_0545"/>
<dbReference type="eggNOG" id="COG0261">
    <property type="taxonomic scope" value="Bacteria"/>
</dbReference>
<dbReference type="HOGENOM" id="CLU_061463_3_2_5"/>
<dbReference type="OrthoDB" id="9813334at2"/>
<dbReference type="Proteomes" id="UP000008320">
    <property type="component" value="Chromosome"/>
</dbReference>
<dbReference type="GO" id="GO:0005737">
    <property type="term" value="C:cytoplasm"/>
    <property type="evidence" value="ECO:0007669"/>
    <property type="project" value="UniProtKB-ARBA"/>
</dbReference>
<dbReference type="GO" id="GO:1990904">
    <property type="term" value="C:ribonucleoprotein complex"/>
    <property type="evidence" value="ECO:0007669"/>
    <property type="project" value="UniProtKB-KW"/>
</dbReference>
<dbReference type="GO" id="GO:0005840">
    <property type="term" value="C:ribosome"/>
    <property type="evidence" value="ECO:0007669"/>
    <property type="project" value="UniProtKB-KW"/>
</dbReference>
<dbReference type="GO" id="GO:0019843">
    <property type="term" value="F:rRNA binding"/>
    <property type="evidence" value="ECO:0007669"/>
    <property type="project" value="UniProtKB-UniRule"/>
</dbReference>
<dbReference type="GO" id="GO:0003735">
    <property type="term" value="F:structural constituent of ribosome"/>
    <property type="evidence" value="ECO:0007669"/>
    <property type="project" value="InterPro"/>
</dbReference>
<dbReference type="GO" id="GO:0006412">
    <property type="term" value="P:translation"/>
    <property type="evidence" value="ECO:0007669"/>
    <property type="project" value="UniProtKB-UniRule"/>
</dbReference>
<dbReference type="HAMAP" id="MF_01363">
    <property type="entry name" value="Ribosomal_bL21"/>
    <property type="match status" value="1"/>
</dbReference>
<dbReference type="InterPro" id="IPR028909">
    <property type="entry name" value="bL21-like"/>
</dbReference>
<dbReference type="InterPro" id="IPR036164">
    <property type="entry name" value="bL21-like_sf"/>
</dbReference>
<dbReference type="InterPro" id="IPR001787">
    <property type="entry name" value="Ribosomal_bL21"/>
</dbReference>
<dbReference type="InterPro" id="IPR018258">
    <property type="entry name" value="Ribosomal_bL21_CS"/>
</dbReference>
<dbReference type="NCBIfam" id="TIGR00061">
    <property type="entry name" value="L21"/>
    <property type="match status" value="1"/>
</dbReference>
<dbReference type="PANTHER" id="PTHR21349">
    <property type="entry name" value="50S RIBOSOMAL PROTEIN L21"/>
    <property type="match status" value="1"/>
</dbReference>
<dbReference type="PANTHER" id="PTHR21349:SF0">
    <property type="entry name" value="LARGE RIBOSOMAL SUBUNIT PROTEIN BL21M"/>
    <property type="match status" value="1"/>
</dbReference>
<dbReference type="Pfam" id="PF00829">
    <property type="entry name" value="Ribosomal_L21p"/>
    <property type="match status" value="1"/>
</dbReference>
<dbReference type="SUPFAM" id="SSF141091">
    <property type="entry name" value="L21p-like"/>
    <property type="match status" value="1"/>
</dbReference>
<dbReference type="PROSITE" id="PS01169">
    <property type="entry name" value="RIBOSOMAL_L21"/>
    <property type="match status" value="1"/>
</dbReference>
<gene>
    <name evidence="1" type="primary">rplU</name>
    <name type="ordered locus">ECH_0545</name>
</gene>
<sequence>MFAIVETGGKQYKVKEQDVIKIEKLNASVGEEVTLDKVIALADVNNNIVFTHNAIVTASVLEQCRNDKIIVFKKKRRKNYRRKNGHRQYMTVLRVTKINNME</sequence>
<keyword id="KW-1185">Reference proteome</keyword>
<keyword id="KW-0687">Ribonucleoprotein</keyword>
<keyword id="KW-0689">Ribosomal protein</keyword>
<keyword id="KW-0694">RNA-binding</keyword>
<keyword id="KW-0699">rRNA-binding</keyword>
<feature type="chain" id="PRO_0000270663" description="Large ribosomal subunit protein bL21">
    <location>
        <begin position="1"/>
        <end position="102"/>
    </location>
</feature>
<comment type="function">
    <text evidence="1">This protein binds to 23S rRNA in the presence of protein L20.</text>
</comment>
<comment type="subunit">
    <text evidence="1">Part of the 50S ribosomal subunit. Contacts protein L20.</text>
</comment>
<comment type="similarity">
    <text evidence="1">Belongs to the bacterial ribosomal protein bL21 family.</text>
</comment>
<accession>Q2GGS5</accession>
<name>RL21_EHRCR</name>
<proteinExistence type="inferred from homology"/>
<organism>
    <name type="scientific">Ehrlichia chaffeensis (strain ATCC CRL-10679 / Arkansas)</name>
    <dbReference type="NCBI Taxonomy" id="205920"/>
    <lineage>
        <taxon>Bacteria</taxon>
        <taxon>Pseudomonadati</taxon>
        <taxon>Pseudomonadota</taxon>
        <taxon>Alphaproteobacteria</taxon>
        <taxon>Rickettsiales</taxon>
        <taxon>Anaplasmataceae</taxon>
        <taxon>Ehrlichia</taxon>
    </lineage>
</organism>